<comment type="function">
    <text evidence="1">Usually encoded in the trnK tRNA gene intron. Probably assists in splicing its own and other chloroplast group II introns.</text>
</comment>
<comment type="subcellular location">
    <subcellularLocation>
        <location>Plastid</location>
        <location>Chloroplast</location>
    </subcellularLocation>
</comment>
<comment type="similarity">
    <text evidence="1">Belongs to the intron maturase 2 family. MatK subfamily.</text>
</comment>
<keyword id="KW-0150">Chloroplast</keyword>
<keyword id="KW-0507">mRNA processing</keyword>
<keyword id="KW-0934">Plastid</keyword>
<keyword id="KW-0694">RNA-binding</keyword>
<keyword id="KW-0819">tRNA processing</keyword>
<feature type="chain" id="PRO_0000355955" description="Maturase K">
    <location>
        <begin position="1"/>
        <end position="508"/>
    </location>
</feature>
<proteinExistence type="inferred from homology"/>
<accession>Q06FY0</accession>
<reference key="1">
    <citation type="journal article" date="2006" name="Mol. Biol. Evol.">
        <title>The complete chloroplast genome sequence of Pelargonium x hortorum: organization and evolution of the largest and most highly rearranged chloroplast genome of land plants.</title>
        <authorList>
            <person name="Chumley T.W."/>
            <person name="Palmer J.D."/>
            <person name="Mower J.P."/>
            <person name="Fourcade H.M."/>
            <person name="Calie P.J."/>
            <person name="Boore J.L."/>
            <person name="Jansen R.K."/>
        </authorList>
    </citation>
    <scope>NUCLEOTIDE SEQUENCE [LARGE SCALE GENOMIC DNA]</scope>
    <source>
        <strain>cv. Ringo White</strain>
    </source>
</reference>
<protein>
    <recommendedName>
        <fullName evidence="1">Maturase K</fullName>
    </recommendedName>
    <alternativeName>
        <fullName evidence="1">Intron maturase</fullName>
    </alternativeName>
</protein>
<name>MATK_PELHO</name>
<evidence type="ECO:0000255" key="1">
    <source>
        <dbReference type="HAMAP-Rule" id="MF_01390"/>
    </source>
</evidence>
<organism>
    <name type="scientific">Pelargonium hortorum</name>
    <name type="common">Common geranium</name>
    <name type="synonym">Pelargonium inquinans x Pelargonium zonale</name>
    <dbReference type="NCBI Taxonomy" id="4031"/>
    <lineage>
        <taxon>Eukaryota</taxon>
        <taxon>Viridiplantae</taxon>
        <taxon>Streptophyta</taxon>
        <taxon>Embryophyta</taxon>
        <taxon>Tracheophyta</taxon>
        <taxon>Spermatophyta</taxon>
        <taxon>Magnoliopsida</taxon>
        <taxon>eudicotyledons</taxon>
        <taxon>Gunneridae</taxon>
        <taxon>Pentapetalae</taxon>
        <taxon>rosids</taxon>
        <taxon>malvids</taxon>
        <taxon>Geraniales</taxon>
        <taxon>Geraniaceae</taxon>
        <taxon>Pelargonium</taxon>
    </lineage>
</organism>
<sequence length="508" mass="59625">MEEFQGYLELDRSRQHDFLYPLIFREYIYGLAHGHGLNRSGFLLLDNVDYDNKYSFLIVKRLIARMYQQNHFHICENDSALNQFIGHNKNLYSQMISEGFADIVEISLFIQLVSYLDGKATSKSLNLRSIHSIFPFLEDECSHLNYASDILIPHPTHLEILVEVLRYSVKDASFLHFLRFLLYEYWSWKSLSIKKKASSIVSKKNERFFVFLYNSHVCEYESILLFLRNQSSHLRSTSFGILLERIFFYKKIGGLVAIFGTPFEHIHILRFLKDPLIHYVRYQGKSILISKDRPLLMNKWKYYLVKLWQCHFYVWSQPGRIHINQLSQHSLHLLGYLLSVGTNPLVVRSQVFDNSFLIDNAMNKLETRIPLFSLIGSLTKAQFCNPLGQPISKSTWADSSDSDIIDRFVRMCRNLSHYYSGSSKKQSLYRLKYILRLSCVKTLARKHKSTVRAFLKKLGSELLEEFIKEEEQVLSLLFPRALSASRRLSTGRIWYFDILCINDLANHE</sequence>
<gene>
    <name evidence="1" type="primary">matK</name>
</gene>
<geneLocation type="chloroplast"/>
<dbReference type="EMBL" id="DQ897681">
    <property type="protein sequence ID" value="ABI17242.1"/>
    <property type="molecule type" value="Genomic_DNA"/>
</dbReference>
<dbReference type="RefSeq" id="YP_784051.1">
    <property type="nucleotide sequence ID" value="NC_008454.1"/>
</dbReference>
<dbReference type="GeneID" id="4362810"/>
<dbReference type="GO" id="GO:0009507">
    <property type="term" value="C:chloroplast"/>
    <property type="evidence" value="ECO:0007669"/>
    <property type="project" value="UniProtKB-SubCell"/>
</dbReference>
<dbReference type="GO" id="GO:0003723">
    <property type="term" value="F:RNA binding"/>
    <property type="evidence" value="ECO:0007669"/>
    <property type="project" value="UniProtKB-KW"/>
</dbReference>
<dbReference type="GO" id="GO:0006397">
    <property type="term" value="P:mRNA processing"/>
    <property type="evidence" value="ECO:0007669"/>
    <property type="project" value="UniProtKB-KW"/>
</dbReference>
<dbReference type="GO" id="GO:0008380">
    <property type="term" value="P:RNA splicing"/>
    <property type="evidence" value="ECO:0007669"/>
    <property type="project" value="UniProtKB-UniRule"/>
</dbReference>
<dbReference type="GO" id="GO:0008033">
    <property type="term" value="P:tRNA processing"/>
    <property type="evidence" value="ECO:0007669"/>
    <property type="project" value="UniProtKB-KW"/>
</dbReference>
<dbReference type="HAMAP" id="MF_01390">
    <property type="entry name" value="MatK"/>
    <property type="match status" value="1"/>
</dbReference>
<dbReference type="InterPro" id="IPR024937">
    <property type="entry name" value="Domain_X"/>
</dbReference>
<dbReference type="InterPro" id="IPR002866">
    <property type="entry name" value="Maturase_MatK"/>
</dbReference>
<dbReference type="InterPro" id="IPR024942">
    <property type="entry name" value="Maturase_MatK_N"/>
</dbReference>
<dbReference type="PANTHER" id="PTHR34811">
    <property type="entry name" value="MATURASE K"/>
    <property type="match status" value="1"/>
</dbReference>
<dbReference type="PANTHER" id="PTHR34811:SF1">
    <property type="entry name" value="MATURASE K"/>
    <property type="match status" value="1"/>
</dbReference>
<dbReference type="Pfam" id="PF01348">
    <property type="entry name" value="Intron_maturas2"/>
    <property type="match status" value="1"/>
</dbReference>
<dbReference type="Pfam" id="PF01824">
    <property type="entry name" value="MatK_N"/>
    <property type="match status" value="1"/>
</dbReference>